<feature type="chain" id="PRO_0000271804" description="Protein nucleotidyltransferase YdiU">
    <location>
        <begin position="1"/>
        <end position="485"/>
    </location>
</feature>
<feature type="active site" description="Proton acceptor" evidence="1">
    <location>
        <position position="265"/>
    </location>
</feature>
<feature type="binding site" evidence="1">
    <location>
        <position position="100"/>
    </location>
    <ligand>
        <name>ATP</name>
        <dbReference type="ChEBI" id="CHEBI:30616"/>
    </ligand>
</feature>
<feature type="binding site" evidence="1">
    <location>
        <position position="102"/>
    </location>
    <ligand>
        <name>ATP</name>
        <dbReference type="ChEBI" id="CHEBI:30616"/>
    </ligand>
</feature>
<feature type="binding site" evidence="1">
    <location>
        <position position="103"/>
    </location>
    <ligand>
        <name>ATP</name>
        <dbReference type="ChEBI" id="CHEBI:30616"/>
    </ligand>
</feature>
<feature type="binding site" evidence="1">
    <location>
        <position position="123"/>
    </location>
    <ligand>
        <name>ATP</name>
        <dbReference type="ChEBI" id="CHEBI:30616"/>
    </ligand>
</feature>
<feature type="binding site" evidence="1">
    <location>
        <position position="135"/>
    </location>
    <ligand>
        <name>ATP</name>
        <dbReference type="ChEBI" id="CHEBI:30616"/>
    </ligand>
</feature>
<feature type="binding site" evidence="1">
    <location>
        <position position="136"/>
    </location>
    <ligand>
        <name>ATP</name>
        <dbReference type="ChEBI" id="CHEBI:30616"/>
    </ligand>
</feature>
<feature type="binding site" evidence="1">
    <location>
        <position position="189"/>
    </location>
    <ligand>
        <name>ATP</name>
        <dbReference type="ChEBI" id="CHEBI:30616"/>
    </ligand>
</feature>
<feature type="binding site" evidence="1">
    <location>
        <position position="196"/>
    </location>
    <ligand>
        <name>ATP</name>
        <dbReference type="ChEBI" id="CHEBI:30616"/>
    </ligand>
</feature>
<feature type="binding site" evidence="1">
    <location>
        <position position="266"/>
    </location>
    <ligand>
        <name>Mg(2+)</name>
        <dbReference type="ChEBI" id="CHEBI:18420"/>
    </ligand>
</feature>
<feature type="binding site" evidence="1">
    <location>
        <position position="275"/>
    </location>
    <ligand>
        <name>ATP</name>
        <dbReference type="ChEBI" id="CHEBI:30616"/>
    </ligand>
</feature>
<feature type="binding site" evidence="1">
    <location>
        <position position="275"/>
    </location>
    <ligand>
        <name>Mg(2+)</name>
        <dbReference type="ChEBI" id="CHEBI:18420"/>
    </ligand>
</feature>
<reference key="1">
    <citation type="journal article" date="2014" name="Stand. Genomic Sci.">
        <title>Complete genome sequence of Anabaena variabilis ATCC 29413.</title>
        <authorList>
            <person name="Thiel T."/>
            <person name="Pratte B.S."/>
            <person name="Zhong J."/>
            <person name="Goodwin L."/>
            <person name="Copeland A."/>
            <person name="Lucas S."/>
            <person name="Han C."/>
            <person name="Pitluck S."/>
            <person name="Land M.L."/>
            <person name="Kyrpides N.C."/>
            <person name="Woyke T."/>
        </authorList>
    </citation>
    <scope>NUCLEOTIDE SEQUENCE [LARGE SCALE GENOMIC DNA]</scope>
    <source>
        <strain>ATCC 29413 / PCC 7937</strain>
    </source>
</reference>
<comment type="function">
    <text evidence="1">Nucleotidyltransferase involved in the post-translational modification of proteins. It can catalyze the addition of adenosine monophosphate (AMP) or uridine monophosphate (UMP) to a protein, resulting in modifications known as AMPylation and UMPylation.</text>
</comment>
<comment type="catalytic activity">
    <reaction evidence="1">
        <text>L-seryl-[protein] + ATP = 3-O-(5'-adenylyl)-L-seryl-[protein] + diphosphate</text>
        <dbReference type="Rhea" id="RHEA:58120"/>
        <dbReference type="Rhea" id="RHEA-COMP:9863"/>
        <dbReference type="Rhea" id="RHEA-COMP:15073"/>
        <dbReference type="ChEBI" id="CHEBI:29999"/>
        <dbReference type="ChEBI" id="CHEBI:30616"/>
        <dbReference type="ChEBI" id="CHEBI:33019"/>
        <dbReference type="ChEBI" id="CHEBI:142516"/>
        <dbReference type="EC" id="2.7.7.108"/>
    </reaction>
</comment>
<comment type="catalytic activity">
    <reaction evidence="1">
        <text>L-threonyl-[protein] + ATP = 3-O-(5'-adenylyl)-L-threonyl-[protein] + diphosphate</text>
        <dbReference type="Rhea" id="RHEA:54292"/>
        <dbReference type="Rhea" id="RHEA-COMP:11060"/>
        <dbReference type="Rhea" id="RHEA-COMP:13847"/>
        <dbReference type="ChEBI" id="CHEBI:30013"/>
        <dbReference type="ChEBI" id="CHEBI:30616"/>
        <dbReference type="ChEBI" id="CHEBI:33019"/>
        <dbReference type="ChEBI" id="CHEBI:138113"/>
        <dbReference type="EC" id="2.7.7.108"/>
    </reaction>
</comment>
<comment type="catalytic activity">
    <reaction evidence="1">
        <text>L-tyrosyl-[protein] + ATP = O-(5'-adenylyl)-L-tyrosyl-[protein] + diphosphate</text>
        <dbReference type="Rhea" id="RHEA:54288"/>
        <dbReference type="Rhea" id="RHEA-COMP:10136"/>
        <dbReference type="Rhea" id="RHEA-COMP:13846"/>
        <dbReference type="ChEBI" id="CHEBI:30616"/>
        <dbReference type="ChEBI" id="CHEBI:33019"/>
        <dbReference type="ChEBI" id="CHEBI:46858"/>
        <dbReference type="ChEBI" id="CHEBI:83624"/>
        <dbReference type="EC" id="2.7.7.108"/>
    </reaction>
</comment>
<comment type="catalytic activity">
    <reaction evidence="1">
        <text>L-histidyl-[protein] + UTP = N(tele)-(5'-uridylyl)-L-histidyl-[protein] + diphosphate</text>
        <dbReference type="Rhea" id="RHEA:83891"/>
        <dbReference type="Rhea" id="RHEA-COMP:9745"/>
        <dbReference type="Rhea" id="RHEA-COMP:20239"/>
        <dbReference type="ChEBI" id="CHEBI:29979"/>
        <dbReference type="ChEBI" id="CHEBI:33019"/>
        <dbReference type="ChEBI" id="CHEBI:46398"/>
        <dbReference type="ChEBI" id="CHEBI:233474"/>
    </reaction>
</comment>
<comment type="catalytic activity">
    <reaction evidence="1">
        <text>L-seryl-[protein] + UTP = O-(5'-uridylyl)-L-seryl-[protein] + diphosphate</text>
        <dbReference type="Rhea" id="RHEA:64604"/>
        <dbReference type="Rhea" id="RHEA-COMP:9863"/>
        <dbReference type="Rhea" id="RHEA-COMP:16635"/>
        <dbReference type="ChEBI" id="CHEBI:29999"/>
        <dbReference type="ChEBI" id="CHEBI:33019"/>
        <dbReference type="ChEBI" id="CHEBI:46398"/>
        <dbReference type="ChEBI" id="CHEBI:156051"/>
    </reaction>
</comment>
<comment type="catalytic activity">
    <reaction evidence="1">
        <text>L-tyrosyl-[protein] + UTP = O-(5'-uridylyl)-L-tyrosyl-[protein] + diphosphate</text>
        <dbReference type="Rhea" id="RHEA:83887"/>
        <dbReference type="Rhea" id="RHEA-COMP:10136"/>
        <dbReference type="Rhea" id="RHEA-COMP:20238"/>
        <dbReference type="ChEBI" id="CHEBI:33019"/>
        <dbReference type="ChEBI" id="CHEBI:46398"/>
        <dbReference type="ChEBI" id="CHEBI:46858"/>
        <dbReference type="ChEBI" id="CHEBI:90602"/>
    </reaction>
</comment>
<comment type="cofactor">
    <cofactor evidence="1">
        <name>Mg(2+)</name>
        <dbReference type="ChEBI" id="CHEBI:18420"/>
    </cofactor>
    <cofactor evidence="1">
        <name>Mn(2+)</name>
        <dbReference type="ChEBI" id="CHEBI:29035"/>
    </cofactor>
</comment>
<comment type="similarity">
    <text evidence="1">Belongs to the SELO family.</text>
</comment>
<organism>
    <name type="scientific">Trichormus variabilis (strain ATCC 29413 / PCC 7937)</name>
    <name type="common">Anabaena variabilis</name>
    <dbReference type="NCBI Taxonomy" id="240292"/>
    <lineage>
        <taxon>Bacteria</taxon>
        <taxon>Bacillati</taxon>
        <taxon>Cyanobacteriota</taxon>
        <taxon>Cyanophyceae</taxon>
        <taxon>Nostocales</taxon>
        <taxon>Nostocaceae</taxon>
        <taxon>Trichormus</taxon>
    </lineage>
</organism>
<keyword id="KW-0067">ATP-binding</keyword>
<keyword id="KW-0460">Magnesium</keyword>
<keyword id="KW-0464">Manganese</keyword>
<keyword id="KW-0479">Metal-binding</keyword>
<keyword id="KW-0547">Nucleotide-binding</keyword>
<keyword id="KW-0548">Nucleotidyltransferase</keyword>
<keyword id="KW-0808">Transferase</keyword>
<proteinExistence type="inferred from homology"/>
<evidence type="ECO:0000255" key="1">
    <source>
        <dbReference type="HAMAP-Rule" id="MF_00692"/>
    </source>
</evidence>
<dbReference type="EC" id="2.7.7.-" evidence="1"/>
<dbReference type="EC" id="2.7.7.108" evidence="1"/>
<dbReference type="EMBL" id="CP000117">
    <property type="protein sequence ID" value="ABA20652.1"/>
    <property type="molecule type" value="Genomic_DNA"/>
</dbReference>
<dbReference type="SMR" id="Q3MED4"/>
<dbReference type="DNASU" id="3678696"/>
<dbReference type="KEGG" id="ava:Ava_1028"/>
<dbReference type="eggNOG" id="COG0397">
    <property type="taxonomic scope" value="Bacteria"/>
</dbReference>
<dbReference type="HOGENOM" id="CLU_010245_0_0_3"/>
<dbReference type="Proteomes" id="UP000002533">
    <property type="component" value="Chromosome"/>
</dbReference>
<dbReference type="GO" id="GO:0070733">
    <property type="term" value="F:AMPylase activity"/>
    <property type="evidence" value="ECO:0007669"/>
    <property type="project" value="RHEA"/>
</dbReference>
<dbReference type="GO" id="GO:0005524">
    <property type="term" value="F:ATP binding"/>
    <property type="evidence" value="ECO:0007669"/>
    <property type="project" value="UniProtKB-UniRule"/>
</dbReference>
<dbReference type="GO" id="GO:0000287">
    <property type="term" value="F:magnesium ion binding"/>
    <property type="evidence" value="ECO:0007669"/>
    <property type="project" value="UniProtKB-UniRule"/>
</dbReference>
<dbReference type="HAMAP" id="MF_00692">
    <property type="entry name" value="YdiU_SelO"/>
    <property type="match status" value="1"/>
</dbReference>
<dbReference type="InterPro" id="IPR003846">
    <property type="entry name" value="SelO"/>
</dbReference>
<dbReference type="NCBIfam" id="NF000658">
    <property type="entry name" value="PRK00029.1"/>
    <property type="match status" value="1"/>
</dbReference>
<dbReference type="PANTHER" id="PTHR32057">
    <property type="entry name" value="PROTEIN ADENYLYLTRANSFERASE SELO, MITOCHONDRIAL"/>
    <property type="match status" value="1"/>
</dbReference>
<dbReference type="PANTHER" id="PTHR32057:SF14">
    <property type="entry name" value="PROTEIN ADENYLYLTRANSFERASE SELO, MITOCHONDRIAL"/>
    <property type="match status" value="1"/>
</dbReference>
<dbReference type="Pfam" id="PF02696">
    <property type="entry name" value="SelO"/>
    <property type="match status" value="1"/>
</dbReference>
<name>SELO_TRIV2</name>
<accession>Q3MED4</accession>
<gene>
    <name evidence="1" type="primary">ydiU</name>
    <name evidence="1" type="synonym">selO</name>
    <name type="ordered locus">Ava_1028</name>
</gene>
<protein>
    <recommendedName>
        <fullName evidence="1">Protein nucleotidyltransferase YdiU</fullName>
        <ecNumber evidence="1">2.7.7.-</ecNumber>
    </recommendedName>
    <alternativeName>
        <fullName evidence="1">Protein adenylyltransferase YdiU</fullName>
        <ecNumber evidence="1">2.7.7.108</ecNumber>
    </alternativeName>
    <alternativeName>
        <fullName evidence="1">Protein uridylyltransferase YdiU</fullName>
        <ecNumber evidence="1">2.7.7.-</ecNumber>
    </alternativeName>
</protein>
<sequence length="485" mass="55784">MTLAETFNTENHPNPLITLNYEPALESLGNDYYDEVTAAEFPQLTLRWRNDAILPRLGLDPQTVTDEDFITAFGLFQGRKPLLALRYHGYQFGEYNPNLGDGRGFLYGQVRGTDGELYDFGTKGSGRTPYSRGGDGMLTLKGGVREVLAAEALHQLGVRTSRCLTMIETGLGLWRGDEPSPTRSSVMVRMNKSHIRFGTFERLHYFQRSDLIKKLLDHVIEHYYQHLTHESDKYALFYAELVKRVAELVAQWMAAGFCHAVLNTDNMSITGESFDYGPYAFIPTYNPYFTAAYFDYYGRYCYIQQPSICQWNLEMLQVPLRAVIDKADMEAGLAKFNEYCHAEYHSLMLKKLGFEQLTTPEAEELLSLTLKFLQESQVGYHQFFYEMARTFSVKWRDEPGLVLSGSDIVPPSGTDANFDNWCVLYHKILNNFDYEQVKIIAQNLTYYNPKTSLLRPTIEEAWEPIVQEDNWQPFYDLVKSIQSRG</sequence>